<keyword id="KW-1185">Reference proteome</keyword>
<keyword id="KW-0694">RNA-binding</keyword>
<keyword id="KW-0804">Transcription</keyword>
<keyword id="KW-0889">Transcription antitermination</keyword>
<keyword id="KW-0805">Transcription regulation</keyword>
<protein>
    <recommendedName>
        <fullName evidence="1">Transcription antitermination protein NusB</fullName>
    </recommendedName>
    <alternativeName>
        <fullName evidence="1">Antitermination factor NusB</fullName>
    </alternativeName>
</protein>
<accession>Q836W8</accession>
<reference key="1">
    <citation type="journal article" date="2003" name="Science">
        <title>Role of mobile DNA in the evolution of vancomycin-resistant Enterococcus faecalis.</title>
        <authorList>
            <person name="Paulsen I.T."/>
            <person name="Banerjei L."/>
            <person name="Myers G.S.A."/>
            <person name="Nelson K.E."/>
            <person name="Seshadri R."/>
            <person name="Read T.D."/>
            <person name="Fouts D.E."/>
            <person name="Eisen J.A."/>
            <person name="Gill S.R."/>
            <person name="Heidelberg J.F."/>
            <person name="Tettelin H."/>
            <person name="Dodson R.J."/>
            <person name="Umayam L.A."/>
            <person name="Brinkac L.M."/>
            <person name="Beanan M.J."/>
            <person name="Daugherty S.C."/>
            <person name="DeBoy R.T."/>
            <person name="Durkin S.A."/>
            <person name="Kolonay J.F."/>
            <person name="Madupu R."/>
            <person name="Nelson W.C."/>
            <person name="Vamathevan J.J."/>
            <person name="Tran B."/>
            <person name="Upton J."/>
            <person name="Hansen T."/>
            <person name="Shetty J."/>
            <person name="Khouri H.M."/>
            <person name="Utterback T.R."/>
            <person name="Radune D."/>
            <person name="Ketchum K.A."/>
            <person name="Dougherty B.A."/>
            <person name="Fraser C.M."/>
        </authorList>
    </citation>
    <scope>NUCLEOTIDE SEQUENCE [LARGE SCALE GENOMIC DNA]</scope>
    <source>
        <strain>ATCC 700802 / V583</strain>
    </source>
</reference>
<proteinExistence type="inferred from homology"/>
<evidence type="ECO:0000255" key="1">
    <source>
        <dbReference type="HAMAP-Rule" id="MF_00073"/>
    </source>
</evidence>
<name>NUSB_ENTFA</name>
<comment type="function">
    <text evidence="1">Involved in transcription antitermination. Required for transcription of ribosomal RNA (rRNA) genes. Binds specifically to the boxA antiterminator sequence of the ribosomal RNA (rrn) operons.</text>
</comment>
<comment type="similarity">
    <text evidence="1">Belongs to the NusB family.</text>
</comment>
<gene>
    <name evidence="1" type="primary">nusB</name>
    <name type="ordered locus">EF_0977</name>
</gene>
<dbReference type="EMBL" id="AE016830">
    <property type="protein sequence ID" value="AAO80783.1"/>
    <property type="molecule type" value="Genomic_DNA"/>
</dbReference>
<dbReference type="RefSeq" id="NP_814713.1">
    <property type="nucleotide sequence ID" value="NC_004668.1"/>
</dbReference>
<dbReference type="SMR" id="Q836W8"/>
<dbReference type="STRING" id="226185.EF_0977"/>
<dbReference type="EnsemblBacteria" id="AAO80783">
    <property type="protein sequence ID" value="AAO80783"/>
    <property type="gene ID" value="EF_0977"/>
</dbReference>
<dbReference type="KEGG" id="efa:EF0977"/>
<dbReference type="PATRIC" id="fig|226185.9.peg.910"/>
<dbReference type="eggNOG" id="COG0781">
    <property type="taxonomic scope" value="Bacteria"/>
</dbReference>
<dbReference type="HOGENOM" id="CLU_087843_3_2_9"/>
<dbReference type="Proteomes" id="UP000001415">
    <property type="component" value="Chromosome"/>
</dbReference>
<dbReference type="GO" id="GO:0005829">
    <property type="term" value="C:cytosol"/>
    <property type="evidence" value="ECO:0007669"/>
    <property type="project" value="TreeGrafter"/>
</dbReference>
<dbReference type="GO" id="GO:0003723">
    <property type="term" value="F:RNA binding"/>
    <property type="evidence" value="ECO:0007669"/>
    <property type="project" value="UniProtKB-UniRule"/>
</dbReference>
<dbReference type="GO" id="GO:0006353">
    <property type="term" value="P:DNA-templated transcription termination"/>
    <property type="evidence" value="ECO:0007669"/>
    <property type="project" value="UniProtKB-UniRule"/>
</dbReference>
<dbReference type="GO" id="GO:0031564">
    <property type="term" value="P:transcription antitermination"/>
    <property type="evidence" value="ECO:0007669"/>
    <property type="project" value="UniProtKB-KW"/>
</dbReference>
<dbReference type="Gene3D" id="1.10.940.10">
    <property type="entry name" value="NusB-like"/>
    <property type="match status" value="1"/>
</dbReference>
<dbReference type="HAMAP" id="MF_00073">
    <property type="entry name" value="NusB"/>
    <property type="match status" value="1"/>
</dbReference>
<dbReference type="InterPro" id="IPR035926">
    <property type="entry name" value="NusB-like_sf"/>
</dbReference>
<dbReference type="InterPro" id="IPR011605">
    <property type="entry name" value="NusB_fam"/>
</dbReference>
<dbReference type="InterPro" id="IPR006027">
    <property type="entry name" value="NusB_RsmB_TIM44"/>
</dbReference>
<dbReference type="NCBIfam" id="TIGR01951">
    <property type="entry name" value="nusB"/>
    <property type="match status" value="1"/>
</dbReference>
<dbReference type="NCBIfam" id="NF001223">
    <property type="entry name" value="PRK00202.1-1"/>
    <property type="match status" value="1"/>
</dbReference>
<dbReference type="PANTHER" id="PTHR11078:SF3">
    <property type="entry name" value="ANTITERMINATION NUSB DOMAIN-CONTAINING PROTEIN"/>
    <property type="match status" value="1"/>
</dbReference>
<dbReference type="PANTHER" id="PTHR11078">
    <property type="entry name" value="N UTILIZATION SUBSTANCE PROTEIN B-RELATED"/>
    <property type="match status" value="1"/>
</dbReference>
<dbReference type="Pfam" id="PF01029">
    <property type="entry name" value="NusB"/>
    <property type="match status" value="1"/>
</dbReference>
<dbReference type="SUPFAM" id="SSF48013">
    <property type="entry name" value="NusB-like"/>
    <property type="match status" value="1"/>
</dbReference>
<feature type="chain" id="PRO_0000176539" description="Transcription antitermination protein NusB">
    <location>
        <begin position="1"/>
        <end position="154"/>
    </location>
</feature>
<organism>
    <name type="scientific">Enterococcus faecalis (strain ATCC 700802 / V583)</name>
    <dbReference type="NCBI Taxonomy" id="226185"/>
    <lineage>
        <taxon>Bacteria</taxon>
        <taxon>Bacillati</taxon>
        <taxon>Bacillota</taxon>
        <taxon>Bacilli</taxon>
        <taxon>Lactobacillales</taxon>
        <taxon>Enterococcaceae</taxon>
        <taxon>Enterococcus</taxon>
    </lineage>
</organism>
<sequence>MEKRMSKTELTRHEIREKALQALFPLDFNADLTKQDAIDYALAYDNREIVSEDGEDLVPTYLDLLVGGVCSRKAELDEVITNHLGNNWSMQRLAKIDIVILRLAIFEMLYVSDVPNIVALNEAVELSKKYSDDRSRKFVNGVLSNVMKEIDSEA</sequence>